<evidence type="ECO:0000250" key="1"/>
<evidence type="ECO:0000255" key="2"/>
<evidence type="ECO:0000305" key="3"/>
<proteinExistence type="evidence at transcript level"/>
<reference key="1">
    <citation type="submission" date="2007-02" db="EMBL/GenBank/DDBJ databases">
        <authorList>
            <consortium name="NIH - Mammalian Gene Collection (MGC) project"/>
        </authorList>
    </citation>
    <scope>NUCLEOTIDE SEQUENCE [LARGE SCALE MRNA]</scope>
    <source>
        <strain>Hereford</strain>
        <tissue>Thymus</tissue>
    </source>
</reference>
<accession>A2VE45</accession>
<organism>
    <name type="scientific">Bos taurus</name>
    <name type="common">Bovine</name>
    <dbReference type="NCBI Taxonomy" id="9913"/>
    <lineage>
        <taxon>Eukaryota</taxon>
        <taxon>Metazoa</taxon>
        <taxon>Chordata</taxon>
        <taxon>Craniata</taxon>
        <taxon>Vertebrata</taxon>
        <taxon>Euteleostomi</taxon>
        <taxon>Mammalia</taxon>
        <taxon>Eutheria</taxon>
        <taxon>Laurasiatheria</taxon>
        <taxon>Artiodactyla</taxon>
        <taxon>Ruminantia</taxon>
        <taxon>Pecora</taxon>
        <taxon>Bovidae</taxon>
        <taxon>Bovinae</taxon>
        <taxon>Bos</taxon>
    </lineage>
</organism>
<comment type="function">
    <text evidence="1">Required for polyglutamylation of axonemal tubulin. Plays a role in anterograde intraflagellar transport (IFT), the process by which cilia precursors are transported from the base of the cilium to the site of their incorporation at the tip.</text>
</comment>
<comment type="subcellular location">
    <subcellularLocation>
        <location evidence="1">Cell projection</location>
        <location evidence="1">Cilium</location>
    </subcellularLocation>
</comment>
<comment type="similarity">
    <text evidence="3">Belongs to the TTC30/dfy-1/fleer family.</text>
</comment>
<gene>
    <name type="primary">IFT70A</name>
    <name type="synonym">TTC30A</name>
</gene>
<dbReference type="EMBL" id="BC133566">
    <property type="protein sequence ID" value="AAI33567.1"/>
    <property type="molecule type" value="mRNA"/>
</dbReference>
<dbReference type="RefSeq" id="NP_001075185.1">
    <property type="nucleotide sequence ID" value="NM_001081716.2"/>
</dbReference>
<dbReference type="SMR" id="A2VE45"/>
<dbReference type="FunCoup" id="A2VE45">
    <property type="interactions" value="914"/>
</dbReference>
<dbReference type="STRING" id="9913.ENSBTAP00000039681"/>
<dbReference type="PaxDb" id="9913-ENSBTAP00000039681"/>
<dbReference type="GeneID" id="510160"/>
<dbReference type="KEGG" id="bta:510160"/>
<dbReference type="CTD" id="92104"/>
<dbReference type="VEuPathDB" id="HostDB:ENSBTAG00000027694"/>
<dbReference type="eggNOG" id="KOG4340">
    <property type="taxonomic scope" value="Eukaryota"/>
</dbReference>
<dbReference type="HOGENOM" id="CLU_023760_0_0_1"/>
<dbReference type="InParanoid" id="A2VE45"/>
<dbReference type="OMA" id="FMQEDKY"/>
<dbReference type="OrthoDB" id="10249577at2759"/>
<dbReference type="TreeFam" id="TF314592"/>
<dbReference type="Reactome" id="R-BTA-5620924">
    <property type="pathway name" value="Intraflagellar transport"/>
</dbReference>
<dbReference type="Proteomes" id="UP000009136">
    <property type="component" value="Chromosome 2"/>
</dbReference>
<dbReference type="Bgee" id="ENSBTAG00000027694">
    <property type="expression patterns" value="Expressed in spermatid and 105 other cell types or tissues"/>
</dbReference>
<dbReference type="GO" id="GO:0005879">
    <property type="term" value="C:axonemal microtubule"/>
    <property type="evidence" value="ECO:0000318"/>
    <property type="project" value="GO_Central"/>
</dbReference>
<dbReference type="GO" id="GO:0030992">
    <property type="term" value="C:intraciliary transport particle B"/>
    <property type="evidence" value="ECO:0000318"/>
    <property type="project" value="GO_Central"/>
</dbReference>
<dbReference type="GO" id="GO:0120170">
    <property type="term" value="F:intraciliary transport particle B binding"/>
    <property type="evidence" value="ECO:0000318"/>
    <property type="project" value="GO_Central"/>
</dbReference>
<dbReference type="GO" id="GO:0042073">
    <property type="term" value="P:intraciliary transport"/>
    <property type="evidence" value="ECO:0000318"/>
    <property type="project" value="GO_Central"/>
</dbReference>
<dbReference type="FunFam" id="1.25.40.10:FF:000226">
    <property type="entry name" value="Tetratricopeptide repeat protein 30A"/>
    <property type="match status" value="1"/>
</dbReference>
<dbReference type="FunFam" id="1.25.40.10:FF:000211">
    <property type="entry name" value="tetratricopeptide repeat protein 30B"/>
    <property type="match status" value="1"/>
</dbReference>
<dbReference type="Gene3D" id="1.25.40.10">
    <property type="entry name" value="Tetratricopeptide repeat domain"/>
    <property type="match status" value="3"/>
</dbReference>
<dbReference type="InterPro" id="IPR011990">
    <property type="entry name" value="TPR-like_helical_dom_sf"/>
</dbReference>
<dbReference type="InterPro" id="IPR019734">
    <property type="entry name" value="TPR_rpt"/>
</dbReference>
<dbReference type="InterPro" id="IPR039941">
    <property type="entry name" value="TT30"/>
</dbReference>
<dbReference type="PANTHER" id="PTHR20931">
    <property type="entry name" value="TETRATRICOPEPTIDE REPEAT PROTEIN 30"/>
    <property type="match status" value="1"/>
</dbReference>
<dbReference type="PANTHER" id="PTHR20931:SF0">
    <property type="entry name" value="TETRATRICOPEPTIDE REPEAT PROTEIN 30"/>
    <property type="match status" value="1"/>
</dbReference>
<dbReference type="Pfam" id="PF13432">
    <property type="entry name" value="TPR_16"/>
    <property type="match status" value="2"/>
</dbReference>
<dbReference type="SMART" id="SM00028">
    <property type="entry name" value="TPR"/>
    <property type="match status" value="4"/>
</dbReference>
<dbReference type="SUPFAM" id="SSF48452">
    <property type="entry name" value="TPR-like"/>
    <property type="match status" value="3"/>
</dbReference>
<dbReference type="PROSITE" id="PS50005">
    <property type="entry name" value="TPR"/>
    <property type="match status" value="3"/>
</dbReference>
<dbReference type="PROSITE" id="PS50293">
    <property type="entry name" value="TPR_REGION"/>
    <property type="match status" value="1"/>
</dbReference>
<protein>
    <recommendedName>
        <fullName>Intraflagellar transport protein 70A</fullName>
    </recommendedName>
    <alternativeName>
        <fullName>Tetratricopeptide repeat protein 30A</fullName>
        <shortName>TPR repeat protein 30A</shortName>
    </alternativeName>
</protein>
<feature type="chain" id="PRO_0000333198" description="Intraflagellar transport protein 70A">
    <location>
        <begin position="1"/>
        <end position="664"/>
    </location>
</feature>
<feature type="repeat" description="TPR 1">
    <location>
        <begin position="11"/>
        <end position="44"/>
    </location>
</feature>
<feature type="repeat" description="TPR 2">
    <location>
        <begin position="45"/>
        <end position="78"/>
    </location>
</feature>
<feature type="repeat" description="TPR 3">
    <location>
        <begin position="153"/>
        <end position="186"/>
    </location>
</feature>
<feature type="repeat" description="TPR 4">
    <location>
        <begin position="188"/>
        <end position="220"/>
    </location>
</feature>
<feature type="repeat" description="TPR 5">
    <location>
        <begin position="392"/>
        <end position="423"/>
    </location>
</feature>
<feature type="repeat" description="TPR 6">
    <location>
        <begin position="424"/>
        <end position="456"/>
    </location>
</feature>
<feature type="repeat" description="TPR 7">
    <location>
        <begin position="458"/>
        <end position="491"/>
    </location>
</feature>
<feature type="repeat" description="TPR 8">
    <location>
        <begin position="543"/>
        <end position="576"/>
    </location>
</feature>
<feature type="coiled-coil region" evidence="2">
    <location>
        <begin position="507"/>
        <end position="534"/>
    </location>
</feature>
<keyword id="KW-0966">Cell projection</keyword>
<keyword id="KW-0969">Cilium</keyword>
<keyword id="KW-0970">Cilium biogenesis/degradation</keyword>
<keyword id="KW-0175">Coiled coil</keyword>
<keyword id="KW-1185">Reference proteome</keyword>
<keyword id="KW-0677">Repeat</keyword>
<keyword id="KW-0802">TPR repeat</keyword>
<sequence length="664" mass="76303">MAGLGGEPIPDGEFTAVVYRLIRDARYAEAVQLLGGELQRSPRSRAGLSLLGYCYYRLQEFALAAECYEQLRQLHPELEQYRLYQAQALYKACLYPEATRVSFLLLDNPTYHNRVLRLQAAIKYSEGDLPGARSLVEQLLSEGGEDSGGENELDGQVNLGCLLYKEGHYEAACSKFSAALQASGYRPDLSYNLALAYFSSRQYASALKHIVEIIEHGIRQHPELGVGMTTEGIDVRSVGNTLVLHQTALVEAFNLKAAIEYQLRNYEAAQETLTDMPPRAEEELDPVTLHNQALMNMDARPTEGFEKLQFLLQQIPFPPETFGNLLLLYCKYEYFDLAADVLAENAHLTYKFLTPYLYDFLDAMITCQTAPEEAFVKLDGLAGMLTEQLRRLTKQVQEARHNKDDEAIKKAENEYDDTLEKYIPVLMAQAKIYWNLENYPMVEKIFRKSVEFCNDHDVWKLNVAHVLFMQENKYKEAIGFYEPIVKKHYDNILKVSAIVLANLCVSYIMTSQNEEAEELMRKIEKEEEQLSYDDPDKKIYHFCIVNLVIGTLYCAKGNYDFGISRVIKSLEPYNKKLGTDTWYYAKRCFLSLLENMSKHMIVLRDSVIQECVQFLEHCELYGRNIPAVIEQPLEEERMHTGKNTVTYESRELKALIYEIIDWNM</sequence>
<name>IT70A_BOVIN</name>